<proteinExistence type="inferred from homology"/>
<comment type="function">
    <text evidence="1">Part of the Tol-Pal system, which plays a role in outer membrane invagination during cell division and is important for maintaining outer membrane integrity.</text>
</comment>
<comment type="subunit">
    <text evidence="1">The Tol-Pal system is composed of five core proteins: the inner membrane proteins TolA, TolQ and TolR, the periplasmic protein TolB and the outer membrane protein Pal. They form a network linking the inner and outer membranes and the peptidoglycan layer.</text>
</comment>
<comment type="subcellular location">
    <subcellularLocation>
        <location evidence="1">Periplasm</location>
    </subcellularLocation>
</comment>
<comment type="similarity">
    <text evidence="1">Belongs to the TolB family.</text>
</comment>
<keyword id="KW-0131">Cell cycle</keyword>
<keyword id="KW-0132">Cell division</keyword>
<keyword id="KW-0574">Periplasm</keyword>
<keyword id="KW-1185">Reference proteome</keyword>
<keyword id="KW-0732">Signal</keyword>
<feature type="signal peptide" evidence="1">
    <location>
        <begin position="1"/>
        <end position="19"/>
    </location>
</feature>
<feature type="chain" id="PRO_0000034662" description="Tol-Pal system protein TolB" evidence="1">
    <location>
        <begin position="20"/>
        <end position="419"/>
    </location>
</feature>
<gene>
    <name evidence="1" type="primary">tolB</name>
    <name type="ordered locus">lpg1571</name>
</gene>
<protein>
    <recommendedName>
        <fullName evidence="1">Tol-Pal system protein TolB</fullName>
    </recommendedName>
</protein>
<organism>
    <name type="scientific">Legionella pneumophila subsp. pneumophila (strain Philadelphia 1 / ATCC 33152 / DSM 7513)</name>
    <dbReference type="NCBI Taxonomy" id="272624"/>
    <lineage>
        <taxon>Bacteria</taxon>
        <taxon>Pseudomonadati</taxon>
        <taxon>Pseudomonadota</taxon>
        <taxon>Gammaproteobacteria</taxon>
        <taxon>Legionellales</taxon>
        <taxon>Legionellaceae</taxon>
        <taxon>Legionella</taxon>
    </lineage>
</organism>
<name>TOLB_LEGPH</name>
<evidence type="ECO:0000255" key="1">
    <source>
        <dbReference type="HAMAP-Rule" id="MF_00671"/>
    </source>
</evidence>
<accession>Q5ZV69</accession>
<sequence>MFNRIISLFLLLFTGQVIALDLELTQGINSALPIAINSFGSNAAAQEIGNVIENDLTISGQFKIISGPQGANSQSSVSTLRQLGADSVVTGRVNQVGNRIEVSFTLADAVANGNILLTKTFQINANQVRALAHHISDEVYQKLTGERGIFSTRIAYISVQRNGGRSRYSLEVADADGHNPQSLLVSSEPIMSPSWSPNGKSISYVSFEKKKAEIFTVSVETGQRRLITSFPGINGAPAWSPDGQHLAVVLSKSGTPKIYDVDLSSGSMKQLTFGNSIDTEPRYSPDGRSLLFTSGRGGSPQVYRLSLADGQISRVTFEGNYNARASYTPDMKHIVMLHREDRQFNIGVQNTGGGPISNLTFSGLDESPSVSPNSRLVLYATRYQDRGVLGIVSIDGRIRMRLPAREGDVQEPAWSPYLS</sequence>
<reference key="1">
    <citation type="journal article" date="2004" name="Science">
        <title>The genomic sequence of the accidental pathogen Legionella pneumophila.</title>
        <authorList>
            <person name="Chien M."/>
            <person name="Morozova I."/>
            <person name="Shi S."/>
            <person name="Sheng H."/>
            <person name="Chen J."/>
            <person name="Gomez S.M."/>
            <person name="Asamani G."/>
            <person name="Hill K."/>
            <person name="Nuara J."/>
            <person name="Feder M."/>
            <person name="Rineer J."/>
            <person name="Greenberg J.J."/>
            <person name="Steshenko V."/>
            <person name="Park S.H."/>
            <person name="Zhao B."/>
            <person name="Teplitskaya E."/>
            <person name="Edwards J.R."/>
            <person name="Pampou S."/>
            <person name="Georghiou A."/>
            <person name="Chou I.-C."/>
            <person name="Iannuccilli W."/>
            <person name="Ulz M.E."/>
            <person name="Kim D.H."/>
            <person name="Geringer-Sameth A."/>
            <person name="Goldsberry C."/>
            <person name="Morozov P."/>
            <person name="Fischer S.G."/>
            <person name="Segal G."/>
            <person name="Qu X."/>
            <person name="Rzhetsky A."/>
            <person name="Zhang P."/>
            <person name="Cayanis E."/>
            <person name="De Jong P.J."/>
            <person name="Ju J."/>
            <person name="Kalachikov S."/>
            <person name="Shuman H.A."/>
            <person name="Russo J.J."/>
        </authorList>
    </citation>
    <scope>NUCLEOTIDE SEQUENCE [LARGE SCALE GENOMIC DNA]</scope>
    <source>
        <strain>Philadelphia 1 / ATCC 33152 / DSM 7513</strain>
    </source>
</reference>
<dbReference type="EMBL" id="AE017354">
    <property type="protein sequence ID" value="AAU27653.1"/>
    <property type="molecule type" value="Genomic_DNA"/>
</dbReference>
<dbReference type="RefSeq" id="WP_010947300.1">
    <property type="nucleotide sequence ID" value="NC_002942.5"/>
</dbReference>
<dbReference type="RefSeq" id="YP_095600.1">
    <property type="nucleotide sequence ID" value="NC_002942.5"/>
</dbReference>
<dbReference type="SMR" id="Q5ZV69"/>
<dbReference type="STRING" id="272624.lpg1571"/>
<dbReference type="PaxDb" id="272624-lpg1571"/>
<dbReference type="GeneID" id="57035561"/>
<dbReference type="KEGG" id="lpn:lpg1571"/>
<dbReference type="PATRIC" id="fig|272624.6.peg.1646"/>
<dbReference type="eggNOG" id="COG0823">
    <property type="taxonomic scope" value="Bacteria"/>
</dbReference>
<dbReference type="HOGENOM" id="CLU_047123_0_0_6"/>
<dbReference type="OrthoDB" id="9802240at2"/>
<dbReference type="Proteomes" id="UP000000609">
    <property type="component" value="Chromosome"/>
</dbReference>
<dbReference type="GO" id="GO:0042597">
    <property type="term" value="C:periplasmic space"/>
    <property type="evidence" value="ECO:0007669"/>
    <property type="project" value="UniProtKB-SubCell"/>
</dbReference>
<dbReference type="GO" id="GO:0051301">
    <property type="term" value="P:cell division"/>
    <property type="evidence" value="ECO:0007669"/>
    <property type="project" value="UniProtKB-UniRule"/>
</dbReference>
<dbReference type="GO" id="GO:0017038">
    <property type="term" value="P:protein import"/>
    <property type="evidence" value="ECO:0007669"/>
    <property type="project" value="InterPro"/>
</dbReference>
<dbReference type="Gene3D" id="2.120.10.30">
    <property type="entry name" value="TolB, C-terminal domain"/>
    <property type="match status" value="1"/>
</dbReference>
<dbReference type="Gene3D" id="3.40.50.10070">
    <property type="entry name" value="TolB, N-terminal domain"/>
    <property type="match status" value="1"/>
</dbReference>
<dbReference type="HAMAP" id="MF_00671">
    <property type="entry name" value="TolB"/>
    <property type="match status" value="1"/>
</dbReference>
<dbReference type="InterPro" id="IPR011042">
    <property type="entry name" value="6-blade_b-propeller_TolB-like"/>
</dbReference>
<dbReference type="InterPro" id="IPR011659">
    <property type="entry name" value="PD40"/>
</dbReference>
<dbReference type="InterPro" id="IPR014167">
    <property type="entry name" value="Tol-Pal_TolB"/>
</dbReference>
<dbReference type="InterPro" id="IPR007195">
    <property type="entry name" value="TolB_N"/>
</dbReference>
<dbReference type="NCBIfam" id="TIGR02800">
    <property type="entry name" value="propeller_TolB"/>
    <property type="match status" value="1"/>
</dbReference>
<dbReference type="PANTHER" id="PTHR36842:SF1">
    <property type="entry name" value="PROTEIN TOLB"/>
    <property type="match status" value="1"/>
</dbReference>
<dbReference type="PANTHER" id="PTHR36842">
    <property type="entry name" value="PROTEIN TOLB HOMOLOG"/>
    <property type="match status" value="1"/>
</dbReference>
<dbReference type="Pfam" id="PF07676">
    <property type="entry name" value="PD40"/>
    <property type="match status" value="3"/>
</dbReference>
<dbReference type="Pfam" id="PF04052">
    <property type="entry name" value="TolB_N"/>
    <property type="match status" value="1"/>
</dbReference>
<dbReference type="SUPFAM" id="SSF52964">
    <property type="entry name" value="TolB, N-terminal domain"/>
    <property type="match status" value="1"/>
</dbReference>
<dbReference type="SUPFAM" id="SSF69304">
    <property type="entry name" value="Tricorn protease N-terminal domain"/>
    <property type="match status" value="1"/>
</dbReference>